<protein>
    <recommendedName>
        <fullName>Uncharacterized protein RC0915</fullName>
    </recommendedName>
</protein>
<sequence length="123" mass="14408">MSVQNICSTKAYDMLISNDNAFLVDVRTREEWQQVGIPHLDNKNKVIFLSWQLNKDFEDNFLSIVNDKIHAIIFFLCRSGYRSFIAANFITNIGYKNCYNISDGFEGNNQDKGWKQNNLPWQF</sequence>
<reference key="1">
    <citation type="journal article" date="2001" name="Science">
        <title>Mechanisms of evolution in Rickettsia conorii and R. prowazekii.</title>
        <authorList>
            <person name="Ogata H."/>
            <person name="Audic S."/>
            <person name="Renesto-Audiffren P."/>
            <person name="Fournier P.-E."/>
            <person name="Barbe V."/>
            <person name="Samson D."/>
            <person name="Roux V."/>
            <person name="Cossart P."/>
            <person name="Weissenbach J."/>
            <person name="Claverie J.-M."/>
            <person name="Raoult D."/>
        </authorList>
    </citation>
    <scope>NUCLEOTIDE SEQUENCE [LARGE SCALE GENOMIC DNA]</scope>
    <source>
        <strain>ATCC VR-613 / Malish 7</strain>
    </source>
</reference>
<evidence type="ECO:0000255" key="1">
    <source>
        <dbReference type="PROSITE-ProRule" id="PRU00173"/>
    </source>
</evidence>
<organism>
    <name type="scientific">Rickettsia conorii (strain ATCC VR-613 / Malish 7)</name>
    <dbReference type="NCBI Taxonomy" id="272944"/>
    <lineage>
        <taxon>Bacteria</taxon>
        <taxon>Pseudomonadati</taxon>
        <taxon>Pseudomonadota</taxon>
        <taxon>Alphaproteobacteria</taxon>
        <taxon>Rickettsiales</taxon>
        <taxon>Rickettsiaceae</taxon>
        <taxon>Rickettsieae</taxon>
        <taxon>Rickettsia</taxon>
        <taxon>spotted fever group</taxon>
    </lineage>
</organism>
<dbReference type="EMBL" id="AE006914">
    <property type="protein sequence ID" value="AAL03453.1"/>
    <property type="molecule type" value="Genomic_DNA"/>
</dbReference>
<dbReference type="PIR" id="C97814">
    <property type="entry name" value="C97814"/>
</dbReference>
<dbReference type="RefSeq" id="WP_004997961.1">
    <property type="nucleotide sequence ID" value="NC_003103.1"/>
</dbReference>
<dbReference type="SMR" id="P0A3K2"/>
<dbReference type="KEGG" id="rco:RC0915"/>
<dbReference type="HOGENOM" id="CLU_089574_10_1_5"/>
<dbReference type="Proteomes" id="UP000000816">
    <property type="component" value="Chromosome"/>
</dbReference>
<dbReference type="CDD" id="cd01522">
    <property type="entry name" value="RHOD_1"/>
    <property type="match status" value="1"/>
</dbReference>
<dbReference type="Gene3D" id="3.40.250.10">
    <property type="entry name" value="Rhodanese-like domain"/>
    <property type="match status" value="1"/>
</dbReference>
<dbReference type="InterPro" id="IPR001763">
    <property type="entry name" value="Rhodanese-like_dom"/>
</dbReference>
<dbReference type="InterPro" id="IPR036873">
    <property type="entry name" value="Rhodanese-like_dom_sf"/>
</dbReference>
<dbReference type="InterPro" id="IPR044240">
    <property type="entry name" value="STR4-like"/>
</dbReference>
<dbReference type="PANTHER" id="PTHR47377">
    <property type="entry name" value="RHODANESE-LIKE DOMAIN-CONTAINING PROTEIN 4, CHLOROPLASTIC"/>
    <property type="match status" value="1"/>
</dbReference>
<dbReference type="PANTHER" id="PTHR47377:SF1">
    <property type="entry name" value="RHODANESE-LIKE DOMAIN-CONTAINING PROTEIN 4, CHLOROPLASTIC"/>
    <property type="match status" value="1"/>
</dbReference>
<dbReference type="Pfam" id="PF00581">
    <property type="entry name" value="Rhodanese"/>
    <property type="match status" value="1"/>
</dbReference>
<dbReference type="SMART" id="SM00450">
    <property type="entry name" value="RHOD"/>
    <property type="match status" value="1"/>
</dbReference>
<dbReference type="SUPFAM" id="SSF52821">
    <property type="entry name" value="Rhodanese/Cell cycle control phosphatase"/>
    <property type="match status" value="1"/>
</dbReference>
<dbReference type="PROSITE" id="PS50206">
    <property type="entry name" value="RHODANESE_3"/>
    <property type="match status" value="1"/>
</dbReference>
<name>Y915_RICCN</name>
<feature type="chain" id="PRO_0000101403" description="Uncharacterized protein RC0915">
    <location>
        <begin position="1"/>
        <end position="123"/>
    </location>
</feature>
<feature type="domain" description="Rhodanese" evidence="1">
    <location>
        <begin position="17"/>
        <end position="117"/>
    </location>
</feature>
<gene>
    <name type="ordered locus">RC0915</name>
</gene>
<accession>P0A3K2</accession>
<accession>Q9AKN7</accession>
<proteinExistence type="predicted"/>